<gene>
    <name evidence="2" type="primary">rpsL</name>
    <name type="ordered locus">Oant_1951</name>
</gene>
<dbReference type="EMBL" id="CP000758">
    <property type="protein sequence ID" value="ABS14667.1"/>
    <property type="molecule type" value="Genomic_DNA"/>
</dbReference>
<dbReference type="RefSeq" id="WP_006471111.1">
    <property type="nucleotide sequence ID" value="NC_009667.1"/>
</dbReference>
<dbReference type="SMR" id="A6X0B3"/>
<dbReference type="STRING" id="439375.Oant_1951"/>
<dbReference type="GeneID" id="61317591"/>
<dbReference type="KEGG" id="oan:Oant_1951"/>
<dbReference type="eggNOG" id="COG0048">
    <property type="taxonomic scope" value="Bacteria"/>
</dbReference>
<dbReference type="HOGENOM" id="CLU_104295_1_2_5"/>
<dbReference type="Proteomes" id="UP000002301">
    <property type="component" value="Chromosome 1"/>
</dbReference>
<dbReference type="GO" id="GO:0015935">
    <property type="term" value="C:small ribosomal subunit"/>
    <property type="evidence" value="ECO:0007669"/>
    <property type="project" value="InterPro"/>
</dbReference>
<dbReference type="GO" id="GO:0019843">
    <property type="term" value="F:rRNA binding"/>
    <property type="evidence" value="ECO:0007669"/>
    <property type="project" value="UniProtKB-UniRule"/>
</dbReference>
<dbReference type="GO" id="GO:0003735">
    <property type="term" value="F:structural constituent of ribosome"/>
    <property type="evidence" value="ECO:0007669"/>
    <property type="project" value="InterPro"/>
</dbReference>
<dbReference type="GO" id="GO:0000049">
    <property type="term" value="F:tRNA binding"/>
    <property type="evidence" value="ECO:0007669"/>
    <property type="project" value="UniProtKB-UniRule"/>
</dbReference>
<dbReference type="GO" id="GO:0006412">
    <property type="term" value="P:translation"/>
    <property type="evidence" value="ECO:0007669"/>
    <property type="project" value="UniProtKB-UniRule"/>
</dbReference>
<dbReference type="CDD" id="cd03368">
    <property type="entry name" value="Ribosomal_S12"/>
    <property type="match status" value="1"/>
</dbReference>
<dbReference type="FunFam" id="2.40.50.140:FF:000001">
    <property type="entry name" value="30S ribosomal protein S12"/>
    <property type="match status" value="1"/>
</dbReference>
<dbReference type="Gene3D" id="2.40.50.140">
    <property type="entry name" value="Nucleic acid-binding proteins"/>
    <property type="match status" value="1"/>
</dbReference>
<dbReference type="HAMAP" id="MF_00403_B">
    <property type="entry name" value="Ribosomal_uS12_B"/>
    <property type="match status" value="1"/>
</dbReference>
<dbReference type="InterPro" id="IPR012340">
    <property type="entry name" value="NA-bd_OB-fold"/>
</dbReference>
<dbReference type="InterPro" id="IPR006032">
    <property type="entry name" value="Ribosomal_uS12"/>
</dbReference>
<dbReference type="InterPro" id="IPR005679">
    <property type="entry name" value="Ribosomal_uS12_bac"/>
</dbReference>
<dbReference type="NCBIfam" id="TIGR00981">
    <property type="entry name" value="rpsL_bact"/>
    <property type="match status" value="1"/>
</dbReference>
<dbReference type="PANTHER" id="PTHR11652">
    <property type="entry name" value="30S RIBOSOMAL PROTEIN S12 FAMILY MEMBER"/>
    <property type="match status" value="1"/>
</dbReference>
<dbReference type="Pfam" id="PF00164">
    <property type="entry name" value="Ribosom_S12_S23"/>
    <property type="match status" value="1"/>
</dbReference>
<dbReference type="PIRSF" id="PIRSF002133">
    <property type="entry name" value="Ribosomal_S12/S23"/>
    <property type="match status" value="1"/>
</dbReference>
<dbReference type="PRINTS" id="PR01034">
    <property type="entry name" value="RIBOSOMALS12"/>
</dbReference>
<dbReference type="SUPFAM" id="SSF50249">
    <property type="entry name" value="Nucleic acid-binding proteins"/>
    <property type="match status" value="1"/>
</dbReference>
<dbReference type="PROSITE" id="PS00055">
    <property type="entry name" value="RIBOSOMAL_S12"/>
    <property type="match status" value="1"/>
</dbReference>
<sequence length="123" mass="13883">MPTVNQLIRKPRIAPVKRNKVPALQANPQKRGVCTRVYTTTPKKPNSALRKVAKVRLTNGFEVIGYIPGEGHNLQEHSVVMIRGGRVKDLPGVRYHIIRGVLDTQGVKNRKQRRSKYGAKRPK</sequence>
<protein>
    <recommendedName>
        <fullName evidence="2">Small ribosomal subunit protein uS12</fullName>
    </recommendedName>
    <alternativeName>
        <fullName evidence="3">30S ribosomal protein S12</fullName>
    </alternativeName>
</protein>
<feature type="chain" id="PRO_1000049798" description="Small ribosomal subunit protein uS12">
    <location>
        <begin position="1"/>
        <end position="123"/>
    </location>
</feature>
<feature type="modified residue" description="3-methylthioaspartic acid" evidence="1">
    <location>
        <position position="89"/>
    </location>
</feature>
<reference key="1">
    <citation type="journal article" date="2011" name="J. Bacteriol.">
        <title>Genome of Ochrobactrum anthropi ATCC 49188 T, a versatile opportunistic pathogen and symbiont of several eukaryotic hosts.</title>
        <authorList>
            <person name="Chain P.S."/>
            <person name="Lang D.M."/>
            <person name="Comerci D.J."/>
            <person name="Malfatti S.A."/>
            <person name="Vergez L.M."/>
            <person name="Shin M."/>
            <person name="Ugalde R.A."/>
            <person name="Garcia E."/>
            <person name="Tolmasky M.E."/>
        </authorList>
    </citation>
    <scope>NUCLEOTIDE SEQUENCE [LARGE SCALE GENOMIC DNA]</scope>
    <source>
        <strain>ATCC 49188 / DSM 6882 / CCUG 24695 / JCM 21032 / LMG 3331 / NBRC 15819 / NCTC 12168 / Alc 37</strain>
    </source>
</reference>
<accession>A6X0B3</accession>
<comment type="function">
    <text evidence="2">With S4 and S5 plays an important role in translational accuracy.</text>
</comment>
<comment type="function">
    <text evidence="2">Interacts with and stabilizes bases of the 16S rRNA that are involved in tRNA selection in the A site and with the mRNA backbone. Located at the interface of the 30S and 50S subunits, it traverses the body of the 30S subunit contacting proteins on the other side and probably holding the rRNA structure together. The combined cluster of proteins S8, S12 and S17 appears to hold together the shoulder and platform of the 30S subunit.</text>
</comment>
<comment type="subunit">
    <text evidence="2">Part of the 30S ribosomal subunit. Contacts proteins S8 and S17. May interact with IF1 in the 30S initiation complex.</text>
</comment>
<comment type="similarity">
    <text evidence="2">Belongs to the universal ribosomal protein uS12 family.</text>
</comment>
<keyword id="KW-0488">Methylation</keyword>
<keyword id="KW-1185">Reference proteome</keyword>
<keyword id="KW-0687">Ribonucleoprotein</keyword>
<keyword id="KW-0689">Ribosomal protein</keyword>
<keyword id="KW-0694">RNA-binding</keyword>
<keyword id="KW-0699">rRNA-binding</keyword>
<keyword id="KW-0820">tRNA-binding</keyword>
<organism>
    <name type="scientific">Brucella anthropi (strain ATCC 49188 / DSM 6882 / CCUG 24695 / JCM 21032 / LMG 3331 / NBRC 15819 / NCTC 12168 / Alc 37)</name>
    <name type="common">Ochrobactrum anthropi</name>
    <dbReference type="NCBI Taxonomy" id="439375"/>
    <lineage>
        <taxon>Bacteria</taxon>
        <taxon>Pseudomonadati</taxon>
        <taxon>Pseudomonadota</taxon>
        <taxon>Alphaproteobacteria</taxon>
        <taxon>Hyphomicrobiales</taxon>
        <taxon>Brucellaceae</taxon>
        <taxon>Brucella/Ochrobactrum group</taxon>
        <taxon>Brucella</taxon>
    </lineage>
</organism>
<evidence type="ECO:0000250" key="1"/>
<evidence type="ECO:0000255" key="2">
    <source>
        <dbReference type="HAMAP-Rule" id="MF_00403"/>
    </source>
</evidence>
<evidence type="ECO:0000305" key="3"/>
<proteinExistence type="inferred from homology"/>
<name>RS12_BRUA4</name>